<feature type="chain" id="PRO_0000417651" description="Probable trehalose-phosphate phosphatase I">
    <location>
        <begin position="1"/>
        <end position="369"/>
    </location>
</feature>
<evidence type="ECO:0000250" key="1"/>
<evidence type="ECO:0000305" key="2"/>
<keyword id="KW-0025">Alternative splicing</keyword>
<keyword id="KW-0378">Hydrolase</keyword>
<keyword id="KW-1185">Reference proteome</keyword>
<keyword id="KW-0346">Stress response</keyword>
<dbReference type="EC" id="3.1.3.12"/>
<dbReference type="EMBL" id="AL356332">
    <property type="protein sequence ID" value="CAB92051.1"/>
    <property type="status" value="ALT_SEQ"/>
    <property type="molecule type" value="Genomic_DNA"/>
</dbReference>
<dbReference type="EMBL" id="CP002688">
    <property type="protein sequence ID" value="ANM70969.1"/>
    <property type="molecule type" value="Genomic_DNA"/>
</dbReference>
<dbReference type="PIR" id="T50014">
    <property type="entry name" value="T50014"/>
</dbReference>
<dbReference type="RefSeq" id="NP_196572.2">
    <molecule id="F4KFG5-1"/>
    <property type="nucleotide sequence ID" value="NM_121048.3"/>
</dbReference>
<dbReference type="SMR" id="F4KFG5"/>
<dbReference type="FunCoup" id="F4KFG5">
    <property type="interactions" value="173"/>
</dbReference>
<dbReference type="STRING" id="3702.F4KFG5"/>
<dbReference type="PaxDb" id="3702-AT5G10100.1"/>
<dbReference type="ProteomicsDB" id="228321">
    <molecule id="F4KFG5-1"/>
</dbReference>
<dbReference type="EnsemblPlants" id="AT5G10100.3">
    <molecule id="F4KFG5-1"/>
    <property type="protein sequence ID" value="AT5G10100.3"/>
    <property type="gene ID" value="AT5G10100"/>
</dbReference>
<dbReference type="GeneID" id="830874"/>
<dbReference type="Gramene" id="AT5G10100.3">
    <molecule id="F4KFG5-1"/>
    <property type="protein sequence ID" value="AT5G10100.3"/>
    <property type="gene ID" value="AT5G10100"/>
</dbReference>
<dbReference type="KEGG" id="ath:AT5G10100"/>
<dbReference type="Araport" id="AT5G10100"/>
<dbReference type="TAIR" id="AT5G10100">
    <property type="gene designation" value="TPPI"/>
</dbReference>
<dbReference type="eggNOG" id="KOG1050">
    <property type="taxonomic scope" value="Eukaryota"/>
</dbReference>
<dbReference type="HOGENOM" id="CLU_037265_1_1_1"/>
<dbReference type="InParanoid" id="F4KFG5"/>
<dbReference type="UniPathway" id="UPA00299"/>
<dbReference type="PRO" id="PR:F4KFG5"/>
<dbReference type="Proteomes" id="UP000006548">
    <property type="component" value="Chromosome 5"/>
</dbReference>
<dbReference type="ExpressionAtlas" id="F4KFG5">
    <property type="expression patterns" value="baseline and differential"/>
</dbReference>
<dbReference type="GO" id="GO:0004805">
    <property type="term" value="F:trehalose-phosphatase activity"/>
    <property type="evidence" value="ECO:0007669"/>
    <property type="project" value="UniProtKB-EC"/>
</dbReference>
<dbReference type="GO" id="GO:0005992">
    <property type="term" value="P:trehalose biosynthetic process"/>
    <property type="evidence" value="ECO:0007669"/>
    <property type="project" value="UniProtKB-UniPathway"/>
</dbReference>
<dbReference type="CDD" id="cd01627">
    <property type="entry name" value="HAD_TPP"/>
    <property type="match status" value="1"/>
</dbReference>
<dbReference type="FunFam" id="3.30.70.1020:FF:000004">
    <property type="entry name" value="Trehalose 6-phosphate phosphatase"/>
    <property type="match status" value="1"/>
</dbReference>
<dbReference type="FunFam" id="3.40.50.1000:FF:000073">
    <property type="entry name" value="Trehalose 6-phosphate phosphatase"/>
    <property type="match status" value="1"/>
</dbReference>
<dbReference type="FunFam" id="3.40.50.1000:FF:000099">
    <property type="entry name" value="Trehalose 6-phosphate phosphatase"/>
    <property type="match status" value="1"/>
</dbReference>
<dbReference type="Gene3D" id="3.40.50.1000">
    <property type="entry name" value="HAD superfamily/HAD-like"/>
    <property type="match status" value="1"/>
</dbReference>
<dbReference type="Gene3D" id="3.30.70.1020">
    <property type="entry name" value="Trehalose-6-phosphate phosphatase related protein, domain 2"/>
    <property type="match status" value="1"/>
</dbReference>
<dbReference type="InterPro" id="IPR036412">
    <property type="entry name" value="HAD-like_sf"/>
</dbReference>
<dbReference type="InterPro" id="IPR006379">
    <property type="entry name" value="HAD-SF_hydro_IIB"/>
</dbReference>
<dbReference type="InterPro" id="IPR023214">
    <property type="entry name" value="HAD_sf"/>
</dbReference>
<dbReference type="InterPro" id="IPR044651">
    <property type="entry name" value="OTSB-like"/>
</dbReference>
<dbReference type="InterPro" id="IPR003337">
    <property type="entry name" value="Trehalose_PPase"/>
</dbReference>
<dbReference type="NCBIfam" id="TIGR01484">
    <property type="entry name" value="HAD-SF-IIB"/>
    <property type="match status" value="1"/>
</dbReference>
<dbReference type="NCBIfam" id="TIGR00685">
    <property type="entry name" value="T6PP"/>
    <property type="match status" value="1"/>
</dbReference>
<dbReference type="PANTHER" id="PTHR43768">
    <property type="entry name" value="TREHALOSE 6-PHOSPHATE PHOSPHATASE"/>
    <property type="match status" value="1"/>
</dbReference>
<dbReference type="PANTHER" id="PTHR43768:SF50">
    <property type="entry name" value="TREHALOSE-PHOSPHATE PHOSPHATASE I-RELATED"/>
    <property type="match status" value="1"/>
</dbReference>
<dbReference type="Pfam" id="PF02358">
    <property type="entry name" value="Trehalose_PPase"/>
    <property type="match status" value="1"/>
</dbReference>
<dbReference type="SUPFAM" id="SSF56784">
    <property type="entry name" value="HAD-like"/>
    <property type="match status" value="1"/>
</dbReference>
<protein>
    <recommendedName>
        <fullName>Probable trehalose-phosphate phosphatase I</fullName>
        <shortName>AtTPPI</shortName>
        <ecNumber>3.1.3.12</ecNumber>
    </recommendedName>
    <alternativeName>
        <fullName>Trehalose 6-phosphate phosphatase</fullName>
    </alternativeName>
</protein>
<proteinExistence type="inferred from homology"/>
<comment type="function">
    <text evidence="1">Removes the phosphate from trehalose 6-phosphate to produce free trehalose. Trehalose accumulation in plant may improve abiotic stress tolerance (By similarity).</text>
</comment>
<comment type="catalytic activity">
    <reaction>
        <text>alpha,alpha-trehalose 6-phosphate + H2O = alpha,alpha-trehalose + phosphate</text>
        <dbReference type="Rhea" id="RHEA:23420"/>
        <dbReference type="ChEBI" id="CHEBI:15377"/>
        <dbReference type="ChEBI" id="CHEBI:16551"/>
        <dbReference type="ChEBI" id="CHEBI:43474"/>
        <dbReference type="ChEBI" id="CHEBI:58429"/>
        <dbReference type="EC" id="3.1.3.12"/>
    </reaction>
</comment>
<comment type="cofactor">
    <cofactor evidence="1">
        <name>a divalent metal cation</name>
        <dbReference type="ChEBI" id="CHEBI:60240"/>
    </cofactor>
</comment>
<comment type="pathway">
    <text>Glycan biosynthesis; trehalose biosynthesis.</text>
</comment>
<comment type="alternative products">
    <event type="alternative splicing"/>
    <isoform>
        <id>F4KFG5-1</id>
        <name>1</name>
        <sequence type="displayed"/>
    </isoform>
    <text>A number of isoforms are produced. According to EST sequences.</text>
</comment>
<comment type="similarity">
    <text evidence="2">Belongs to the trehalose phosphatase family.</text>
</comment>
<comment type="sequence caution" evidence="2">
    <conflict type="erroneous gene model prediction">
        <sequence resource="EMBL-CDS" id="CAB92051"/>
    </conflict>
</comment>
<gene>
    <name type="primary">TPPI</name>
    <name type="ordered locus">At5g10100</name>
    <name type="ORF">T31P16.90</name>
</gene>
<organism>
    <name type="scientific">Arabidopsis thaliana</name>
    <name type="common">Mouse-ear cress</name>
    <dbReference type="NCBI Taxonomy" id="3702"/>
    <lineage>
        <taxon>Eukaryota</taxon>
        <taxon>Viridiplantae</taxon>
        <taxon>Streptophyta</taxon>
        <taxon>Embryophyta</taxon>
        <taxon>Tracheophyta</taxon>
        <taxon>Spermatophyta</taxon>
        <taxon>Magnoliopsida</taxon>
        <taxon>eudicotyledons</taxon>
        <taxon>Gunneridae</taxon>
        <taxon>Pentapetalae</taxon>
        <taxon>rosids</taxon>
        <taxon>malvids</taxon>
        <taxon>Brassicales</taxon>
        <taxon>Brassicaceae</taxon>
        <taxon>Camelineae</taxon>
        <taxon>Arabidopsis</taxon>
    </lineage>
</organism>
<accession>F4KFG5</accession>
<accession>Q9LX18</accession>
<name>TPPI_ARATH</name>
<sequence length="369" mass="41974">MSASQNIVVSETTMSSIIPNNNNNNNNSSSQKLPPCLISISKKKLLKNIDIINGGGQRINAWVDSMRASSPTHLKSLPSSISTQQQLNSWIMQHPSALEKFEQIMEASRGKQIVMFLDYDGTLSPIVDDPDKAFMSSKMRRTVKKLAKCFPTAIVTGRCIDKVYNFVKLAELYYAGSHGMDIKGPAKGFSRHKRVKQSLLYQPANDYLPMIDEVYRQLLEKTKSTPGAKVENHKFCASVHFRCVDEKKWSELVLQVRSVLKKFPTLQLTQGRKVFEIRPMIEWDKGKALEFLLESLGFGNTNNVFPVYIGDDRTDEDAFKMLRDRGEGFGILVSKFPKDTDASYSLQDPSEVMDFLRRLVEWKQMQPRM</sequence>
<reference key="1">
    <citation type="journal article" date="2000" name="Nature">
        <title>Sequence and analysis of chromosome 5 of the plant Arabidopsis thaliana.</title>
        <authorList>
            <person name="Tabata S."/>
            <person name="Kaneko T."/>
            <person name="Nakamura Y."/>
            <person name="Kotani H."/>
            <person name="Kato T."/>
            <person name="Asamizu E."/>
            <person name="Miyajima N."/>
            <person name="Sasamoto S."/>
            <person name="Kimura T."/>
            <person name="Hosouchi T."/>
            <person name="Kawashima K."/>
            <person name="Kohara M."/>
            <person name="Matsumoto M."/>
            <person name="Matsuno A."/>
            <person name="Muraki A."/>
            <person name="Nakayama S."/>
            <person name="Nakazaki N."/>
            <person name="Naruo K."/>
            <person name="Okumura S."/>
            <person name="Shinpo S."/>
            <person name="Takeuchi C."/>
            <person name="Wada T."/>
            <person name="Watanabe A."/>
            <person name="Yamada M."/>
            <person name="Yasuda M."/>
            <person name="Sato S."/>
            <person name="de la Bastide M."/>
            <person name="Huang E."/>
            <person name="Spiegel L."/>
            <person name="Gnoj L."/>
            <person name="O'Shaughnessy A."/>
            <person name="Preston R."/>
            <person name="Habermann K."/>
            <person name="Murray J."/>
            <person name="Johnson D."/>
            <person name="Rohlfing T."/>
            <person name="Nelson J."/>
            <person name="Stoneking T."/>
            <person name="Pepin K."/>
            <person name="Spieth J."/>
            <person name="Sekhon M."/>
            <person name="Armstrong J."/>
            <person name="Becker M."/>
            <person name="Belter E."/>
            <person name="Cordum H."/>
            <person name="Cordes M."/>
            <person name="Courtney L."/>
            <person name="Courtney W."/>
            <person name="Dante M."/>
            <person name="Du H."/>
            <person name="Edwards J."/>
            <person name="Fryman J."/>
            <person name="Haakensen B."/>
            <person name="Lamar E."/>
            <person name="Latreille P."/>
            <person name="Leonard S."/>
            <person name="Meyer R."/>
            <person name="Mulvaney E."/>
            <person name="Ozersky P."/>
            <person name="Riley A."/>
            <person name="Strowmatt C."/>
            <person name="Wagner-McPherson C."/>
            <person name="Wollam A."/>
            <person name="Yoakum M."/>
            <person name="Bell M."/>
            <person name="Dedhia N."/>
            <person name="Parnell L."/>
            <person name="Shah R."/>
            <person name="Rodriguez M."/>
            <person name="Hoon See L."/>
            <person name="Vil D."/>
            <person name="Baker J."/>
            <person name="Kirchoff K."/>
            <person name="Toth K."/>
            <person name="King L."/>
            <person name="Bahret A."/>
            <person name="Miller B."/>
            <person name="Marra M.A."/>
            <person name="Martienssen R."/>
            <person name="McCombie W.R."/>
            <person name="Wilson R.K."/>
            <person name="Murphy G."/>
            <person name="Bancroft I."/>
            <person name="Volckaert G."/>
            <person name="Wambutt R."/>
            <person name="Duesterhoeft A."/>
            <person name="Stiekema W."/>
            <person name="Pohl T."/>
            <person name="Entian K.-D."/>
            <person name="Terryn N."/>
            <person name="Hartley N."/>
            <person name="Bent E."/>
            <person name="Johnson S."/>
            <person name="Langham S.-A."/>
            <person name="McCullagh B."/>
            <person name="Robben J."/>
            <person name="Grymonprez B."/>
            <person name="Zimmermann W."/>
            <person name="Ramsperger U."/>
            <person name="Wedler H."/>
            <person name="Balke K."/>
            <person name="Wedler E."/>
            <person name="Peters S."/>
            <person name="van Staveren M."/>
            <person name="Dirkse W."/>
            <person name="Mooijman P."/>
            <person name="Klein Lankhorst R."/>
            <person name="Weitzenegger T."/>
            <person name="Bothe G."/>
            <person name="Rose M."/>
            <person name="Hauf J."/>
            <person name="Berneiser S."/>
            <person name="Hempel S."/>
            <person name="Feldpausch M."/>
            <person name="Lamberth S."/>
            <person name="Villarroel R."/>
            <person name="Gielen J."/>
            <person name="Ardiles W."/>
            <person name="Bents O."/>
            <person name="Lemcke K."/>
            <person name="Kolesov G."/>
            <person name="Mayer K.F.X."/>
            <person name="Rudd S."/>
            <person name="Schoof H."/>
            <person name="Schueller C."/>
            <person name="Zaccaria P."/>
            <person name="Mewes H.-W."/>
            <person name="Bevan M."/>
            <person name="Fransz P.F."/>
        </authorList>
    </citation>
    <scope>NUCLEOTIDE SEQUENCE [LARGE SCALE GENOMIC DNA]</scope>
    <source>
        <strain>cv. Columbia</strain>
    </source>
</reference>
<reference key="2">
    <citation type="journal article" date="2017" name="Plant J.">
        <title>Araport11: a complete reannotation of the Arabidopsis thaliana reference genome.</title>
        <authorList>
            <person name="Cheng C.Y."/>
            <person name="Krishnakumar V."/>
            <person name="Chan A.P."/>
            <person name="Thibaud-Nissen F."/>
            <person name="Schobel S."/>
            <person name="Town C.D."/>
        </authorList>
    </citation>
    <scope>GENOME REANNOTATION</scope>
    <source>
        <strain>cv. Columbia</strain>
    </source>
</reference>
<reference key="3">
    <citation type="journal article" date="2003" name="J. Exp. Bot.">
        <title>Is trehalose-6-phosphate a regulator of sugar metabolism in plants?</title>
        <authorList>
            <person name="Eastmond P.J."/>
            <person name="Li Y."/>
            <person name="Graham I.A."/>
        </authorList>
    </citation>
    <scope>GENE FAMILY</scope>
</reference>
<reference key="4">
    <citation type="journal article" date="2004" name="Plant Physiol.">
        <title>Trehalose mediated growth inhibition of Arabidopsis seedlings is due to trehalose-6-phosphate accumulation.</title>
        <authorList>
            <person name="Schluepmann H."/>
            <person name="van Dijken A.J.H."/>
            <person name="Aghdasi M."/>
            <person name="Wobbes B."/>
            <person name="Paul M."/>
            <person name="Smeekens S.C.M."/>
        </authorList>
    </citation>
    <scope>NOMENCLATURE</scope>
</reference>